<evidence type="ECO:0000250" key="1"/>
<evidence type="ECO:0000250" key="2">
    <source>
        <dbReference type="UniProtKB" id="Q0VGY8"/>
    </source>
</evidence>
<evidence type="ECO:0000250" key="3">
    <source>
        <dbReference type="UniProtKB" id="Q9C0D5"/>
    </source>
</evidence>
<evidence type="ECO:0000256" key="4">
    <source>
        <dbReference type="SAM" id="MobiDB-lite"/>
    </source>
</evidence>
<evidence type="ECO:0000269" key="5">
    <source>
    </source>
</evidence>
<evidence type="ECO:0000269" key="6">
    <source>
    </source>
</evidence>
<evidence type="ECO:0000305" key="7"/>
<evidence type="ECO:0007744" key="8">
    <source>
    </source>
</evidence>
<name>TANC1_RAT</name>
<accession>Q6F6B3</accession>
<feature type="chain" id="PRO_0000316961" description="Protein TANC1">
    <location>
        <begin position="1"/>
        <end position="1849"/>
    </location>
</feature>
<feature type="repeat" description="ANK 1">
    <location>
        <begin position="886"/>
        <end position="918"/>
    </location>
</feature>
<feature type="repeat" description="ANK 2">
    <location>
        <begin position="924"/>
        <end position="953"/>
    </location>
</feature>
<feature type="repeat" description="ANK 3">
    <location>
        <begin position="957"/>
        <end position="986"/>
    </location>
</feature>
<feature type="repeat" description="ANK 4">
    <location>
        <begin position="990"/>
        <end position="1019"/>
    </location>
</feature>
<feature type="repeat" description="ANK 5">
    <location>
        <begin position="1030"/>
        <end position="1059"/>
    </location>
</feature>
<feature type="repeat" description="ANK 6">
    <location>
        <begin position="1068"/>
        <end position="1097"/>
    </location>
</feature>
<feature type="repeat" description="ANK 7">
    <location>
        <begin position="1101"/>
        <end position="1130"/>
    </location>
</feature>
<feature type="repeat" description="ANK 8">
    <location>
        <begin position="1134"/>
        <end position="1163"/>
    </location>
</feature>
<feature type="repeat" description="ANK 9">
    <location>
        <begin position="1167"/>
        <end position="1196"/>
    </location>
</feature>
<feature type="repeat" description="ANK 10">
    <location>
        <begin position="1200"/>
        <end position="1229"/>
    </location>
</feature>
<feature type="repeat" description="ANK 11">
    <location>
        <begin position="1233"/>
        <end position="1262"/>
    </location>
</feature>
<feature type="repeat" description="TPR 1">
    <location>
        <begin position="1279"/>
        <end position="1312"/>
    </location>
</feature>
<feature type="repeat" description="TPR 2">
    <location>
        <begin position="1326"/>
        <end position="1359"/>
    </location>
</feature>
<feature type="repeat" description="TPR 3">
    <location>
        <begin position="1361"/>
        <end position="1393"/>
    </location>
</feature>
<feature type="region of interest" description="Disordered" evidence="4">
    <location>
        <begin position="1"/>
        <end position="47"/>
    </location>
</feature>
<feature type="region of interest" description="Disordered" evidence="4">
    <location>
        <begin position="59"/>
        <end position="109"/>
    </location>
</feature>
<feature type="region of interest" description="Disordered" evidence="4">
    <location>
        <begin position="264"/>
        <end position="309"/>
    </location>
</feature>
<feature type="region of interest" description="Disordered" evidence="4">
    <location>
        <begin position="430"/>
        <end position="481"/>
    </location>
</feature>
<feature type="region of interest" description="Disordered" evidence="4">
    <location>
        <begin position="1410"/>
        <end position="1503"/>
    </location>
</feature>
<feature type="region of interest" description="Disordered" evidence="4">
    <location>
        <begin position="1527"/>
        <end position="1605"/>
    </location>
</feature>
<feature type="region of interest" description="Disordered" evidence="4">
    <location>
        <begin position="1635"/>
        <end position="1711"/>
    </location>
</feature>
<feature type="region of interest" description="Disordered" evidence="4">
    <location>
        <begin position="1812"/>
        <end position="1849"/>
    </location>
</feature>
<feature type="compositionally biased region" description="Basic and acidic residues" evidence="4">
    <location>
        <begin position="8"/>
        <end position="21"/>
    </location>
</feature>
<feature type="compositionally biased region" description="Polar residues" evidence="4">
    <location>
        <begin position="27"/>
        <end position="46"/>
    </location>
</feature>
<feature type="compositionally biased region" description="Low complexity" evidence="4">
    <location>
        <begin position="451"/>
        <end position="468"/>
    </location>
</feature>
<feature type="compositionally biased region" description="Low complexity" evidence="4">
    <location>
        <begin position="1410"/>
        <end position="1421"/>
    </location>
</feature>
<feature type="compositionally biased region" description="Acidic residues" evidence="4">
    <location>
        <begin position="1447"/>
        <end position="1456"/>
    </location>
</feature>
<feature type="compositionally biased region" description="Polar residues" evidence="4">
    <location>
        <begin position="1527"/>
        <end position="1546"/>
    </location>
</feature>
<feature type="compositionally biased region" description="Polar residues" evidence="4">
    <location>
        <begin position="1593"/>
        <end position="1603"/>
    </location>
</feature>
<feature type="compositionally biased region" description="Low complexity" evidence="4">
    <location>
        <begin position="1649"/>
        <end position="1679"/>
    </location>
</feature>
<feature type="modified residue" description="N-acetylmethionine" evidence="3">
    <location>
        <position position="1"/>
    </location>
</feature>
<feature type="modified residue" description="Phosphoserine" evidence="3">
    <location>
        <position position="60"/>
    </location>
</feature>
<feature type="modified residue" description="Phosphoserine" evidence="3">
    <location>
        <position position="63"/>
    </location>
</feature>
<feature type="modified residue" description="Phosphoserine" evidence="3">
    <location>
        <position position="64"/>
    </location>
</feature>
<feature type="modified residue" description="Phosphoserine" evidence="3">
    <location>
        <position position="204"/>
    </location>
</feature>
<feature type="modified residue" description="Phosphoserine" evidence="3">
    <location>
        <position position="267"/>
    </location>
</feature>
<feature type="modified residue" description="Phosphoserine" evidence="3">
    <location>
        <position position="455"/>
    </location>
</feature>
<feature type="modified residue" description="Phosphoserine" evidence="8">
    <location>
        <position position="1429"/>
    </location>
</feature>
<feature type="modified residue" description="Phosphoserine" evidence="8">
    <location>
        <position position="1456"/>
    </location>
</feature>
<feature type="modified residue" description="Phosphoserine" evidence="3">
    <location>
        <position position="1658"/>
    </location>
</feature>
<feature type="modified residue" description="Phosphoserine" evidence="2">
    <location>
        <position position="1666"/>
    </location>
</feature>
<feature type="modified residue" description="Phosphoserine" evidence="2">
    <location>
        <position position="1667"/>
    </location>
</feature>
<feature type="mutagenesis site" description="Abolishes interaction with DLG1, DLG4 and HOMER1." evidence="5">
    <location>
        <position position="1849"/>
    </location>
</feature>
<keyword id="KW-0007">Acetylation</keyword>
<keyword id="KW-0040">ANK repeat</keyword>
<keyword id="KW-0597">Phosphoprotein</keyword>
<keyword id="KW-1185">Reference proteome</keyword>
<keyword id="KW-0677">Repeat</keyword>
<keyword id="KW-0770">Synapse</keyword>
<keyword id="KW-0802">TPR repeat</keyword>
<protein>
    <recommendedName>
        <fullName>Protein TANC1</fullName>
    </recommendedName>
    <alternativeName>
        <fullName>TPR domain, ankyrin-repeat and coiled-coil domain-containing protein 1</fullName>
    </alternativeName>
</protein>
<reference key="1">
    <citation type="journal article" date="2005" name="Eur. J. Neurosci.">
        <title>A novel scaffold protein, TANC, possibly a rat homolog of Drosophila rolling pebbles (rols), forms a multiprotein complex with various postsynaptic density proteins.</title>
        <authorList>
            <person name="Suzuki T."/>
            <person name="Li W."/>
            <person name="Zhang J.P."/>
            <person name="Tian Q.B."/>
            <person name="Sakagami H."/>
            <person name="Usuda N."/>
            <person name="Kondo H."/>
            <person name="Fujii T."/>
            <person name="Endo S."/>
        </authorList>
    </citation>
    <scope>NUCLEOTIDE SEQUENCE [MRNA]</scope>
    <scope>TISSUE SPECIFICITY</scope>
    <scope>SUBCELLULAR LOCATION</scope>
    <scope>INTERACTION WITH DLG1; DLG4; HOMER1; DLGAP1; INA; CAMK2A; GRIN2B AND GRIA1</scope>
    <scope>MUTAGENESIS OF VAL-1849</scope>
</reference>
<reference key="2">
    <citation type="journal article" date="2008" name="Biochem. Biophys. Res. Commun.">
        <title>MINK is a Rap2 effector for phosphorylation of the postsynaptic scaffold protein TANC1.</title>
        <authorList>
            <person name="Nonaka H."/>
            <person name="Takei K."/>
            <person name="Umikawa M."/>
            <person name="Oshiro M."/>
            <person name="Kuninaka K."/>
            <person name="Bayarjargal M."/>
            <person name="Asato T."/>
            <person name="Yamashiro Y."/>
            <person name="Uechi Y."/>
            <person name="Endo S."/>
            <person name="Suzuki T."/>
            <person name="Kariya K."/>
        </authorList>
    </citation>
    <scope>INTERACTION WITH TNIK AND MINK1</scope>
</reference>
<reference key="3">
    <citation type="journal article" date="2012" name="Nat. Commun.">
        <title>Quantitative maps of protein phosphorylation sites across 14 different rat organs and tissues.</title>
        <authorList>
            <person name="Lundby A."/>
            <person name="Secher A."/>
            <person name="Lage K."/>
            <person name="Nordsborg N.B."/>
            <person name="Dmytriyev A."/>
            <person name="Lundby C."/>
            <person name="Olsen J.V."/>
        </authorList>
    </citation>
    <scope>PHOSPHORYLATION [LARGE SCALE ANALYSIS] AT SER-1429 AND SER-1456</scope>
    <scope>IDENTIFICATION BY MASS SPECTROMETRY [LARGE SCALE ANALYSIS]</scope>
</reference>
<gene>
    <name type="primary">Tanc1</name>
    <name type="synonym">Tanc</name>
</gene>
<sequence>MLKAVLKKSREGVKGSKKEAGGDFGSETPTLSSSGDSPVNSLSTTEDTYRVSLAKGVSMSLPSSPLLPRQSHLTQSRANKKSPGPVRKPKYVESPRVPGDPVMIPFREGSKPAEPIETEAKVDNEPSCSPAAQELLTRLGFLLGEGIPSATHITIEDKNEAMCTALSQGISPCSTLTSSTASPSTDSPCSTLNSCVSKTAANKSPCETISSPSSTLESKDSGIIATITSSSENDDRSGSSLEWNRDGSLRLGVQKGVLHDRRLDNCSPVAEEETTGSAESVLPKAESSAGDGPVPYSQSSGSLIMPRPNSVAATSSTKLEDLSYLDGQRNAPLRTSIRLPWHSTAGARFAPYKPQEILLKPLLFEVPSITTDSVFVGRDWLFQQIEENLRNTELAENRGAVVVGNVGFGKTAIISKLVALSCHGSRMRQVASSSPSSSLKTSDPTHDLPGTPLLSPSSSTSALSAARTPPGPGTVDSQRPREDAVKYLASRVVAYHYCQADNTYTCLVPEFVHSIATLLCRSHQLAAYRDLLIREPQLQSMLNLRSCVQDPVAAFKRGILEPLTNLRNEQKIPEEEYIILIDGLNEAEFHKPDHGDTLSSFITKIIPKFPPWLKLIVTVRADFQEIISTLPFVKLSLDDFPGNQDIHSDLHAYVQHRVHSSQDILSNISLNGKADAALIGKVSSRLVLRNLGSYLYLKLTLDLFQRGHLVIKSASYKVVPVSLSELYLLQCNMKFMTQSAFDRALPILNVALASLHPMTDEQIFQAINAGHIQGEQGWEDFQQKMEALSCFLIKKRDKTRMFCHPSFREWLVWRADGESTAFLCEPRNGHALLAFMFSRQESKLNRQQTVELGHHILKAHIFKGLSKKTGVSSSHPQALWIGYSTEGLSAALASLRNLYTPNVKVSRLLILGGANVNYRTEVLNNAPILCVQSHLGHEEVVTLLLEFGACLDGMSENGMNALCYAAAAGHMKLVCLLTKKGARVDHLDKKGQCALVHSALRGHSDILQYLLNCEWSAGPPQPGTLRKSQALQQALTAAASMGHSAVVQSLLGMAEEHEIEVNGTDTLWGETALTAAAGRGKLEICELLLERGAAVSRANRRGVPPLFCAARQGHWQVVQLLLDRGCDVNPNDKQGRTPLMVAACEGHLSTVEFLLSKGAALSSLDKEGLSALSWACLKGHRAVVQYLVEEGAEIDQTDKNGRTPLDLAAFYGDAETVLYLVEKGAVIEHVDHSGMRPLDRAIGCRNTAVVVTLLRKGAKLGNAAWAMATFKPDILIILLQKLMEEGNVMYKKGKMKEAAQRYQYALRKFPREGPGEDMRPFNELRVSLYLNLSRCRRKTNDFGLAEEFASKALELKPKSYEAFYARARAKRNSRQFLAALADLQEAVKLCPTNQEIKRLLARVEEECKQLQRNQQQKQQAPLPAPPNDSDNDEEAPASSLKDHFPIEEAEEEDTSSQEESISPTPRSQPPPSVPSPYIRNLQEGLQSKGRPASPQSWAGISKSLRETVAQPGLVMQPTKQAQIVKTNQHLGSGQSSMRNSNTKVQVSSQNPPPSPMPGRVSAAPAVSRNQHLEGTGPFSTGTGCGHFGDRLGPSQSLQLQRGESGTAYPLPSKVKAAERLLAHASVAVDMALPSQGGPVSCSDVRHPASLSSSGSSGSPSSSVKMSSSTSSLTSSSSVSDGFKAQGPDCRIRDRGTTQVQGGTAEHRPRNTPFMGIMDKIARFQQQVNPPSRSWHCPVTEGLLTNTATAAGLQTNSEKPALKPGGYCSQAKPCSVPPLGMGVHNGAQVKELEENKCQVPALCQDNRKTKGVPHLYPEGVSKQPLHVSTEAHRSHLTSAKPKRSFIESNV</sequence>
<organism>
    <name type="scientific">Rattus norvegicus</name>
    <name type="common">Rat</name>
    <dbReference type="NCBI Taxonomy" id="10116"/>
    <lineage>
        <taxon>Eukaryota</taxon>
        <taxon>Metazoa</taxon>
        <taxon>Chordata</taxon>
        <taxon>Craniata</taxon>
        <taxon>Vertebrata</taxon>
        <taxon>Euteleostomi</taxon>
        <taxon>Mammalia</taxon>
        <taxon>Eutheria</taxon>
        <taxon>Euarchontoglires</taxon>
        <taxon>Glires</taxon>
        <taxon>Rodentia</taxon>
        <taxon>Myomorpha</taxon>
        <taxon>Muroidea</taxon>
        <taxon>Muridae</taxon>
        <taxon>Murinae</taxon>
        <taxon>Rattus</taxon>
    </lineage>
</organism>
<dbReference type="EMBL" id="AB098072">
    <property type="protein sequence ID" value="BAD27523.1"/>
    <property type="molecule type" value="mRNA"/>
</dbReference>
<dbReference type="RefSeq" id="NP_001002854.1">
    <property type="nucleotide sequence ID" value="NM_001002854.1"/>
</dbReference>
<dbReference type="SMR" id="Q6F6B3"/>
<dbReference type="BioGRID" id="259817">
    <property type="interactions" value="12"/>
</dbReference>
<dbReference type="FunCoup" id="Q6F6B3">
    <property type="interactions" value="1323"/>
</dbReference>
<dbReference type="IntAct" id="Q6F6B3">
    <property type="interactions" value="2"/>
</dbReference>
<dbReference type="STRING" id="10116.ENSRNOP00000033136"/>
<dbReference type="GlyGen" id="Q6F6B3">
    <property type="glycosylation" value="1 site"/>
</dbReference>
<dbReference type="iPTMnet" id="Q6F6B3"/>
<dbReference type="PhosphoSitePlus" id="Q6F6B3"/>
<dbReference type="PaxDb" id="10116-ENSRNOP00000033136"/>
<dbReference type="PeptideAtlas" id="Q6F6B3"/>
<dbReference type="GeneID" id="311055"/>
<dbReference type="KEGG" id="rno:311055"/>
<dbReference type="UCSC" id="RGD:1302949">
    <property type="organism name" value="rat"/>
</dbReference>
<dbReference type="AGR" id="RGD:1302949"/>
<dbReference type="CTD" id="85461"/>
<dbReference type="RGD" id="1302949">
    <property type="gene designation" value="Tanc1"/>
</dbReference>
<dbReference type="eggNOG" id="KOG0504">
    <property type="taxonomic scope" value="Eukaryota"/>
</dbReference>
<dbReference type="InParanoid" id="Q6F6B3"/>
<dbReference type="PhylomeDB" id="Q6F6B3"/>
<dbReference type="PRO" id="PR:Q6F6B3"/>
<dbReference type="Proteomes" id="UP000002494">
    <property type="component" value="Unplaced"/>
</dbReference>
<dbReference type="GO" id="GO:0043679">
    <property type="term" value="C:axon terminus"/>
    <property type="evidence" value="ECO:0000266"/>
    <property type="project" value="RGD"/>
</dbReference>
<dbReference type="GO" id="GO:0030425">
    <property type="term" value="C:dendrite"/>
    <property type="evidence" value="ECO:0000266"/>
    <property type="project" value="RGD"/>
</dbReference>
<dbReference type="GO" id="GO:0098978">
    <property type="term" value="C:glutamatergic synapse"/>
    <property type="evidence" value="ECO:0000314"/>
    <property type="project" value="SynGO"/>
</dbReference>
<dbReference type="GO" id="GO:0043025">
    <property type="term" value="C:neuronal cell body"/>
    <property type="evidence" value="ECO:0000266"/>
    <property type="project" value="RGD"/>
</dbReference>
<dbReference type="GO" id="GO:0099092">
    <property type="term" value="C:postsynaptic density, intracellular component"/>
    <property type="evidence" value="ECO:0000314"/>
    <property type="project" value="SynGO"/>
</dbReference>
<dbReference type="GO" id="GO:0097062">
    <property type="term" value="P:dendritic spine maintenance"/>
    <property type="evidence" value="ECO:0000266"/>
    <property type="project" value="RGD"/>
</dbReference>
<dbReference type="GO" id="GO:0007520">
    <property type="term" value="P:myoblast fusion"/>
    <property type="evidence" value="ECO:0000266"/>
    <property type="project" value="RGD"/>
</dbReference>
<dbReference type="GO" id="GO:0099175">
    <property type="term" value="P:regulation of postsynapse organization"/>
    <property type="evidence" value="ECO:0000314"/>
    <property type="project" value="SynGO"/>
</dbReference>
<dbReference type="GO" id="GO:0008542">
    <property type="term" value="P:visual learning"/>
    <property type="evidence" value="ECO:0000266"/>
    <property type="project" value="RGD"/>
</dbReference>
<dbReference type="FunFam" id="1.25.40.20:FF:000229">
    <property type="entry name" value="protein TANC1 isoform X3"/>
    <property type="match status" value="1"/>
</dbReference>
<dbReference type="FunFam" id="1.25.40.20:FF:000036">
    <property type="entry name" value="protein TANC2 isoform X2"/>
    <property type="match status" value="1"/>
</dbReference>
<dbReference type="FunFam" id="1.25.40.10:FF:000044">
    <property type="entry name" value="Tetratricopeptide repeat, ankyrin repeat and coiled-coil containing 1"/>
    <property type="match status" value="1"/>
</dbReference>
<dbReference type="Gene3D" id="1.25.40.20">
    <property type="entry name" value="Ankyrin repeat-containing domain"/>
    <property type="match status" value="3"/>
</dbReference>
<dbReference type="Gene3D" id="1.25.40.10">
    <property type="entry name" value="Tetratricopeptide repeat domain"/>
    <property type="match status" value="1"/>
</dbReference>
<dbReference type="InterPro" id="IPR002110">
    <property type="entry name" value="Ankyrin_rpt"/>
</dbReference>
<dbReference type="InterPro" id="IPR036770">
    <property type="entry name" value="Ankyrin_rpt-contain_sf"/>
</dbReference>
<dbReference type="InterPro" id="IPR050889">
    <property type="entry name" value="Dendritic_Spine_Reg/Scaffold"/>
</dbReference>
<dbReference type="InterPro" id="IPR011990">
    <property type="entry name" value="TPR-like_helical_dom_sf"/>
</dbReference>
<dbReference type="InterPro" id="IPR019734">
    <property type="entry name" value="TPR_rpt"/>
</dbReference>
<dbReference type="PANTHER" id="PTHR24166:SF23">
    <property type="entry name" value="PROTEIN TANC1"/>
    <property type="match status" value="1"/>
</dbReference>
<dbReference type="PANTHER" id="PTHR24166">
    <property type="entry name" value="ROLLING PEBBLES, ISOFORM B"/>
    <property type="match status" value="1"/>
</dbReference>
<dbReference type="Pfam" id="PF00023">
    <property type="entry name" value="Ank"/>
    <property type="match status" value="1"/>
</dbReference>
<dbReference type="Pfam" id="PF12796">
    <property type="entry name" value="Ank_2"/>
    <property type="match status" value="2"/>
</dbReference>
<dbReference type="Pfam" id="PF13637">
    <property type="entry name" value="Ank_4"/>
    <property type="match status" value="1"/>
</dbReference>
<dbReference type="SMART" id="SM00248">
    <property type="entry name" value="ANK"/>
    <property type="match status" value="10"/>
</dbReference>
<dbReference type="SMART" id="SM00028">
    <property type="entry name" value="TPR"/>
    <property type="match status" value="3"/>
</dbReference>
<dbReference type="SUPFAM" id="SSF48403">
    <property type="entry name" value="Ankyrin repeat"/>
    <property type="match status" value="1"/>
</dbReference>
<dbReference type="SUPFAM" id="SSF48452">
    <property type="entry name" value="TPR-like"/>
    <property type="match status" value="1"/>
</dbReference>
<dbReference type="PROSITE" id="PS50297">
    <property type="entry name" value="ANK_REP_REGION"/>
    <property type="match status" value="1"/>
</dbReference>
<dbReference type="PROSITE" id="PS50088">
    <property type="entry name" value="ANK_REPEAT"/>
    <property type="match status" value="6"/>
</dbReference>
<dbReference type="PROSITE" id="PS50005">
    <property type="entry name" value="TPR"/>
    <property type="match status" value="3"/>
</dbReference>
<dbReference type="PROSITE" id="PS50293">
    <property type="entry name" value="TPR_REGION"/>
    <property type="match status" value="1"/>
</dbReference>
<comment type="function">
    <text>May be a scaffold component in the postsynaptic density.</text>
</comment>
<comment type="subunit">
    <text evidence="5 6">Interacts probably directly with DLG1, DLG4, HOMER1. Interacts with DLGAP1, INA, CAMK2A, GRIN2B and GRIA1. Interacts with TNIK and MINK1.</text>
</comment>
<comment type="interaction">
    <interactant intactId="EBI-2133582">
        <id>Q6F6B3</id>
    </interactant>
    <interactant intactId="EBI-1051794">
        <id>Q9UKE5</id>
        <label>TNIK</label>
    </interactant>
    <organismsDiffer>true</organismsDiffer>
    <experiments>2</experiments>
</comment>
<comment type="subcellular location">
    <subcellularLocation>
        <location evidence="5">Postsynaptic density</location>
    </subcellularLocation>
    <text>Largly colocalizes with SYP/synaptophysin, DLG1, DLG4 and GRIA1 at synaptic sites.</text>
</comment>
<comment type="tissue specificity">
    <text evidence="5">Expressed in heart, lung, liver and kidney. Expressed in brain (at protein level).</text>
</comment>
<comment type="developmental stage">
    <text>Detected as early as postnatal day one with increasing expression levels through 20 weeks after birth.</text>
</comment>
<comment type="PTM">
    <text evidence="1">Phosphorylated; by MINK1 and TNIK upon stimulation by RAP2A.</text>
</comment>
<comment type="similarity">
    <text evidence="7">Belongs to the TANC family.</text>
</comment>
<proteinExistence type="evidence at protein level"/>